<evidence type="ECO:0000255" key="1">
    <source>
        <dbReference type="PROSITE-ProRule" id="PRU00435"/>
    </source>
</evidence>
<sequence length="113" mass="12951">MSMAEYKGKVKNIQDTPFGYTLSLIGGKWKMVIIYLLAEDQPIRFKELKRQIGTITYKTLSSQLKELEADGLVKRKEYPQVPPKVEYSLTDKAGTLLPILEELCEWGVKNQNN</sequence>
<reference key="1">
    <citation type="journal article" date="1999" name="Extremophiles">
        <title>Sequencing of three lambda clones from the genome of alkaliphilic Bacillus sp. strain C-125.</title>
        <authorList>
            <person name="Takami H."/>
            <person name="Nakasone K."/>
            <person name="Ogasawara N."/>
            <person name="Hirama C."/>
            <person name="Nakamura Y."/>
            <person name="Masui N."/>
            <person name="Fuji F."/>
            <person name="Takaki Y."/>
            <person name="Inoue A."/>
            <person name="Horikoshi K."/>
        </authorList>
    </citation>
    <scope>NUCLEOTIDE SEQUENCE [GENOMIC DNA]</scope>
    <source>
        <strain>ATCC BAA-125 / DSM 18197 / FERM 7344 / JCM 9153 / C-125</strain>
    </source>
</reference>
<reference key="2">
    <citation type="journal article" date="2000" name="Nucleic Acids Res.">
        <title>Complete genome sequence of the alkaliphilic bacterium Bacillus halodurans and genomic sequence comparison with Bacillus subtilis.</title>
        <authorList>
            <person name="Takami H."/>
            <person name="Nakasone K."/>
            <person name="Takaki Y."/>
            <person name="Maeno G."/>
            <person name="Sasaki R."/>
            <person name="Masui N."/>
            <person name="Fuji F."/>
            <person name="Hirama C."/>
            <person name="Nakamura Y."/>
            <person name="Ogasawara N."/>
            <person name="Kuhara S."/>
            <person name="Horikoshi K."/>
        </authorList>
    </citation>
    <scope>NUCLEOTIDE SEQUENCE [LARGE SCALE GENOMIC DNA]</scope>
    <source>
        <strain>ATCC BAA-125 / DSM 18197 / FERM 7344 / JCM 9153 / C-125</strain>
    </source>
</reference>
<proteinExistence type="predicted"/>
<keyword id="KW-0238">DNA-binding</keyword>
<keyword id="KW-1185">Reference proteome</keyword>
<keyword id="KW-0804">Transcription</keyword>
<keyword id="KW-0805">Transcription regulation</keyword>
<organism>
    <name type="scientific">Halalkalibacterium halodurans (strain ATCC BAA-125 / DSM 18197 / FERM 7344 / JCM 9153 / C-125)</name>
    <name type="common">Bacillus halodurans</name>
    <dbReference type="NCBI Taxonomy" id="272558"/>
    <lineage>
        <taxon>Bacteria</taxon>
        <taxon>Bacillati</taxon>
        <taxon>Bacillota</taxon>
        <taxon>Bacilli</taxon>
        <taxon>Bacillales</taxon>
        <taxon>Bacillaceae</taxon>
        <taxon>Halalkalibacterium (ex Joshi et al. 2022)</taxon>
    </lineage>
</organism>
<accession>Q9Z9W1</accession>
<accession>Q9JPV9</accession>
<gene>
    <name type="ordered locus">BH0655</name>
</gene>
<feature type="chain" id="PRO_0000148884" description="Uncharacterized HTH-type transcriptional regulator BH0655">
    <location>
        <begin position="1"/>
        <end position="113"/>
    </location>
</feature>
<feature type="domain" description="HTH hxlR-type" evidence="1">
    <location>
        <begin position="16"/>
        <end position="113"/>
    </location>
</feature>
<protein>
    <recommendedName>
        <fullName>Uncharacterized HTH-type transcriptional regulator BH0655</fullName>
    </recommendedName>
</protein>
<dbReference type="EMBL" id="AB011836">
    <property type="protein sequence ID" value="BAA75321.1"/>
    <property type="molecule type" value="Genomic_DNA"/>
</dbReference>
<dbReference type="EMBL" id="BA000004">
    <property type="protein sequence ID" value="BAB04374.1"/>
    <property type="molecule type" value="Genomic_DNA"/>
</dbReference>
<dbReference type="PIR" id="T44302">
    <property type="entry name" value="T44302"/>
</dbReference>
<dbReference type="RefSeq" id="WP_010896831.1">
    <property type="nucleotide sequence ID" value="NC_002570.2"/>
</dbReference>
<dbReference type="SMR" id="Q9Z9W1"/>
<dbReference type="STRING" id="272558.gene:10726529"/>
<dbReference type="KEGG" id="bha:BH0655"/>
<dbReference type="eggNOG" id="COG1733">
    <property type="taxonomic scope" value="Bacteria"/>
</dbReference>
<dbReference type="HOGENOM" id="CLU_111585_5_2_9"/>
<dbReference type="OrthoDB" id="9791143at2"/>
<dbReference type="Proteomes" id="UP000001258">
    <property type="component" value="Chromosome"/>
</dbReference>
<dbReference type="GO" id="GO:0003677">
    <property type="term" value="F:DNA binding"/>
    <property type="evidence" value="ECO:0007669"/>
    <property type="project" value="UniProtKB-KW"/>
</dbReference>
<dbReference type="CDD" id="cd00090">
    <property type="entry name" value="HTH_ARSR"/>
    <property type="match status" value="1"/>
</dbReference>
<dbReference type="Gene3D" id="1.10.10.10">
    <property type="entry name" value="Winged helix-like DNA-binding domain superfamily/Winged helix DNA-binding domain"/>
    <property type="match status" value="1"/>
</dbReference>
<dbReference type="InterPro" id="IPR011991">
    <property type="entry name" value="ArsR-like_HTH"/>
</dbReference>
<dbReference type="InterPro" id="IPR002577">
    <property type="entry name" value="HTH_HxlR"/>
</dbReference>
<dbReference type="InterPro" id="IPR036388">
    <property type="entry name" value="WH-like_DNA-bd_sf"/>
</dbReference>
<dbReference type="InterPro" id="IPR036390">
    <property type="entry name" value="WH_DNA-bd_sf"/>
</dbReference>
<dbReference type="PANTHER" id="PTHR33204:SF29">
    <property type="entry name" value="TRANSCRIPTIONAL REGULATOR"/>
    <property type="match status" value="1"/>
</dbReference>
<dbReference type="PANTHER" id="PTHR33204">
    <property type="entry name" value="TRANSCRIPTIONAL REGULATOR, MARR FAMILY"/>
    <property type="match status" value="1"/>
</dbReference>
<dbReference type="Pfam" id="PF01638">
    <property type="entry name" value="HxlR"/>
    <property type="match status" value="1"/>
</dbReference>
<dbReference type="SUPFAM" id="SSF46785">
    <property type="entry name" value="Winged helix' DNA-binding domain"/>
    <property type="match status" value="1"/>
</dbReference>
<dbReference type="PROSITE" id="PS51118">
    <property type="entry name" value="HTH_HXLR"/>
    <property type="match status" value="1"/>
</dbReference>
<name>Y655_HALH5</name>